<sequence length="69" mass="8090">MKAKEIRDLTTSEIEEQIKSSKEELFNLRFQLATGQLEETARIRTVRKTIARLKTVAREREIEQSKANQ</sequence>
<feature type="chain" id="PRO_0000130459" description="Large ribosomal subunit protein uL29">
    <location>
        <begin position="1"/>
        <end position="69"/>
    </location>
</feature>
<keyword id="KW-0687">Ribonucleoprotein</keyword>
<keyword id="KW-0689">Ribosomal protein</keyword>
<evidence type="ECO:0000255" key="1">
    <source>
        <dbReference type="HAMAP-Rule" id="MF_00374"/>
    </source>
</evidence>
<evidence type="ECO:0000305" key="2"/>
<dbReference type="EMBL" id="BX571857">
    <property type="protein sequence ID" value="CAG43944.1"/>
    <property type="molecule type" value="Genomic_DNA"/>
</dbReference>
<dbReference type="RefSeq" id="WP_000644737.1">
    <property type="nucleotide sequence ID" value="NC_002953.3"/>
</dbReference>
<dbReference type="SMR" id="Q6G779"/>
<dbReference type="GeneID" id="98346554"/>
<dbReference type="KEGG" id="sas:SAS2133"/>
<dbReference type="HOGENOM" id="CLU_158491_5_2_9"/>
<dbReference type="GO" id="GO:0022625">
    <property type="term" value="C:cytosolic large ribosomal subunit"/>
    <property type="evidence" value="ECO:0007669"/>
    <property type="project" value="TreeGrafter"/>
</dbReference>
<dbReference type="GO" id="GO:0003735">
    <property type="term" value="F:structural constituent of ribosome"/>
    <property type="evidence" value="ECO:0007669"/>
    <property type="project" value="InterPro"/>
</dbReference>
<dbReference type="GO" id="GO:0006412">
    <property type="term" value="P:translation"/>
    <property type="evidence" value="ECO:0007669"/>
    <property type="project" value="UniProtKB-UniRule"/>
</dbReference>
<dbReference type="CDD" id="cd00427">
    <property type="entry name" value="Ribosomal_L29_HIP"/>
    <property type="match status" value="1"/>
</dbReference>
<dbReference type="FunFam" id="1.10.287.310:FF:000001">
    <property type="entry name" value="50S ribosomal protein L29"/>
    <property type="match status" value="1"/>
</dbReference>
<dbReference type="Gene3D" id="1.10.287.310">
    <property type="match status" value="1"/>
</dbReference>
<dbReference type="HAMAP" id="MF_00374">
    <property type="entry name" value="Ribosomal_uL29"/>
    <property type="match status" value="1"/>
</dbReference>
<dbReference type="InterPro" id="IPR050063">
    <property type="entry name" value="Ribosomal_protein_uL29"/>
</dbReference>
<dbReference type="InterPro" id="IPR001854">
    <property type="entry name" value="Ribosomal_uL29"/>
</dbReference>
<dbReference type="InterPro" id="IPR036049">
    <property type="entry name" value="Ribosomal_uL29_sf"/>
</dbReference>
<dbReference type="NCBIfam" id="TIGR00012">
    <property type="entry name" value="L29"/>
    <property type="match status" value="1"/>
</dbReference>
<dbReference type="PANTHER" id="PTHR10916">
    <property type="entry name" value="60S RIBOSOMAL PROTEIN L35/50S RIBOSOMAL PROTEIN L29"/>
    <property type="match status" value="1"/>
</dbReference>
<dbReference type="PANTHER" id="PTHR10916:SF0">
    <property type="entry name" value="LARGE RIBOSOMAL SUBUNIT PROTEIN UL29C"/>
    <property type="match status" value="1"/>
</dbReference>
<dbReference type="Pfam" id="PF00831">
    <property type="entry name" value="Ribosomal_L29"/>
    <property type="match status" value="1"/>
</dbReference>
<dbReference type="SUPFAM" id="SSF46561">
    <property type="entry name" value="Ribosomal protein L29 (L29p)"/>
    <property type="match status" value="1"/>
</dbReference>
<name>RL29_STAAS</name>
<proteinExistence type="inferred from homology"/>
<protein>
    <recommendedName>
        <fullName evidence="1">Large ribosomal subunit protein uL29</fullName>
    </recommendedName>
    <alternativeName>
        <fullName evidence="2">50S ribosomal protein L29</fullName>
    </alternativeName>
</protein>
<accession>Q6G779</accession>
<organism>
    <name type="scientific">Staphylococcus aureus (strain MSSA476)</name>
    <dbReference type="NCBI Taxonomy" id="282459"/>
    <lineage>
        <taxon>Bacteria</taxon>
        <taxon>Bacillati</taxon>
        <taxon>Bacillota</taxon>
        <taxon>Bacilli</taxon>
        <taxon>Bacillales</taxon>
        <taxon>Staphylococcaceae</taxon>
        <taxon>Staphylococcus</taxon>
    </lineage>
</organism>
<gene>
    <name evidence="1" type="primary">rpmC</name>
    <name type="ordered locus">SAS2133</name>
</gene>
<reference key="1">
    <citation type="journal article" date="2004" name="Proc. Natl. Acad. Sci. U.S.A.">
        <title>Complete genomes of two clinical Staphylococcus aureus strains: evidence for the rapid evolution of virulence and drug resistance.</title>
        <authorList>
            <person name="Holden M.T.G."/>
            <person name="Feil E.J."/>
            <person name="Lindsay J.A."/>
            <person name="Peacock S.J."/>
            <person name="Day N.P.J."/>
            <person name="Enright M.C."/>
            <person name="Foster T.J."/>
            <person name="Moore C.E."/>
            <person name="Hurst L."/>
            <person name="Atkin R."/>
            <person name="Barron A."/>
            <person name="Bason N."/>
            <person name="Bentley S.D."/>
            <person name="Chillingworth C."/>
            <person name="Chillingworth T."/>
            <person name="Churcher C."/>
            <person name="Clark L."/>
            <person name="Corton C."/>
            <person name="Cronin A."/>
            <person name="Doggett J."/>
            <person name="Dowd L."/>
            <person name="Feltwell T."/>
            <person name="Hance Z."/>
            <person name="Harris B."/>
            <person name="Hauser H."/>
            <person name="Holroyd S."/>
            <person name="Jagels K."/>
            <person name="James K.D."/>
            <person name="Lennard N."/>
            <person name="Line A."/>
            <person name="Mayes R."/>
            <person name="Moule S."/>
            <person name="Mungall K."/>
            <person name="Ormond D."/>
            <person name="Quail M.A."/>
            <person name="Rabbinowitsch E."/>
            <person name="Rutherford K.M."/>
            <person name="Sanders M."/>
            <person name="Sharp S."/>
            <person name="Simmonds M."/>
            <person name="Stevens K."/>
            <person name="Whitehead S."/>
            <person name="Barrell B.G."/>
            <person name="Spratt B.G."/>
            <person name="Parkhill J."/>
        </authorList>
    </citation>
    <scope>NUCLEOTIDE SEQUENCE [LARGE SCALE GENOMIC DNA]</scope>
    <source>
        <strain>MSSA476</strain>
    </source>
</reference>
<comment type="similarity">
    <text evidence="1">Belongs to the universal ribosomal protein uL29 family.</text>
</comment>